<accession>P72079</accession>
<reference key="1">
    <citation type="submission" date="1996-11" db="EMBL/GenBank/DDBJ databases">
        <authorList>
            <person name="Radia A."/>
            <person name="Dillon J.R."/>
        </authorList>
    </citation>
    <scope>NUCLEOTIDE SEQUENCE [GENOMIC DNA]</scope>
</reference>
<feature type="chain" id="PRO_0000114367" description="Cell division protein FtsZ">
    <location>
        <begin position="1"/>
        <end position="392"/>
    </location>
</feature>
<feature type="binding site" evidence="1">
    <location>
        <begin position="24"/>
        <end position="28"/>
    </location>
    <ligand>
        <name>GTP</name>
        <dbReference type="ChEBI" id="CHEBI:37565"/>
    </ligand>
</feature>
<feature type="binding site" evidence="1">
    <location>
        <begin position="111"/>
        <end position="113"/>
    </location>
    <ligand>
        <name>GTP</name>
        <dbReference type="ChEBI" id="CHEBI:37565"/>
    </ligand>
</feature>
<feature type="binding site" evidence="1">
    <location>
        <position position="142"/>
    </location>
    <ligand>
        <name>GTP</name>
        <dbReference type="ChEBI" id="CHEBI:37565"/>
    </ligand>
</feature>
<feature type="binding site" evidence="1">
    <location>
        <position position="145"/>
    </location>
    <ligand>
        <name>GTP</name>
        <dbReference type="ChEBI" id="CHEBI:37565"/>
    </ligand>
</feature>
<feature type="binding site" evidence="1">
    <location>
        <position position="189"/>
    </location>
    <ligand>
        <name>GTP</name>
        <dbReference type="ChEBI" id="CHEBI:37565"/>
    </ligand>
</feature>
<sequence length="392" mass="41542">MEFVYDVAESAVSPAVIKVIGLGGGGCNAINNMVANNVRSVEFISANTDAQSLAKNHAAKRIQLGTNLTRGLGAGANPDIGRAAAQEDREAIEEAIRGANMLFITTGMGGGTGTGSAPVVAEIAKSLGILTVAVVTRPFSYEGKRVHVAQAGLEQLKEHVDSLIIIPNDKLMTALGEDVTMREAFRAADNVLRDAVAGISEVVTCPSEIINLDFADVKTVMSNRGIAMMGSGYAQGIDRARMATDQAISSPLLDDVTLDGARGVLVNITTAPGCLKMSELSEVMKIVNQSAHPDLECKFGAAEDETMSEDAIRITIIATGLKEKGAVDPTPEREVEAVAPSKQEQSHIVEGMIRTNRGIRTMNLTAADFDNQSVLDDFEIPAILRRQHNSDK</sequence>
<name>FTSZ_NEIGO</name>
<keyword id="KW-0131">Cell cycle</keyword>
<keyword id="KW-0132">Cell division</keyword>
<keyword id="KW-0963">Cytoplasm</keyword>
<keyword id="KW-0342">GTP-binding</keyword>
<keyword id="KW-0547">Nucleotide-binding</keyword>
<keyword id="KW-0717">Septation</keyword>
<proteinExistence type="evidence at protein level"/>
<protein>
    <recommendedName>
        <fullName evidence="1">Cell division protein FtsZ</fullName>
    </recommendedName>
</protein>
<comment type="function">
    <text evidence="1">Essential cell division protein that forms a contractile ring structure (Z ring) at the future cell division site. The regulation of the ring assembly controls the timing and the location of cell division. One of the functions of the FtsZ ring is to recruit other cell division proteins to the septum to produce a new cell wall between the dividing cells. Binds GTP and shows GTPase activity.</text>
</comment>
<comment type="subunit">
    <text evidence="1">Homodimer. Polymerizes to form a dynamic ring structure in a strictly GTP-dependent manner. Interacts directly with several other division proteins.</text>
</comment>
<comment type="interaction">
    <interactant intactId="EBI-25765884">
        <id>P72079</id>
    </interactant>
    <interactant intactId="EBI-25765942">
        <id>A0A1D3IEB2</id>
        <label>ftsA</label>
    </interactant>
    <organismsDiffer>false</organismsDiffer>
    <experiments>2</experiments>
</comment>
<comment type="subcellular location">
    <subcellularLocation>
        <location evidence="1">Cytoplasm</location>
    </subcellularLocation>
    <text evidence="1">Assembles at midcell at the inner surface of the cytoplasmic membrane.</text>
</comment>
<comment type="similarity">
    <text evidence="1">Belongs to the FtsZ family.</text>
</comment>
<evidence type="ECO:0000255" key="1">
    <source>
        <dbReference type="HAMAP-Rule" id="MF_00909"/>
    </source>
</evidence>
<organism>
    <name type="scientific">Neisseria gonorrhoeae</name>
    <dbReference type="NCBI Taxonomy" id="485"/>
    <lineage>
        <taxon>Bacteria</taxon>
        <taxon>Pseudomonadati</taxon>
        <taxon>Pseudomonadota</taxon>
        <taxon>Betaproteobacteria</taxon>
        <taxon>Neisseriales</taxon>
        <taxon>Neisseriaceae</taxon>
        <taxon>Neisseria</taxon>
    </lineage>
</organism>
<gene>
    <name evidence="1" type="primary">ftsZ</name>
</gene>
<dbReference type="EMBL" id="U76537">
    <property type="protein sequence ID" value="AAB18965.1"/>
    <property type="molecule type" value="Genomic_DNA"/>
</dbReference>
<dbReference type="SMR" id="P72079"/>
<dbReference type="IntAct" id="P72079">
    <property type="interactions" value="2"/>
</dbReference>
<dbReference type="MINT" id="P72079"/>
<dbReference type="GO" id="GO:0032153">
    <property type="term" value="C:cell division site"/>
    <property type="evidence" value="ECO:0007669"/>
    <property type="project" value="UniProtKB-UniRule"/>
</dbReference>
<dbReference type="GO" id="GO:0005737">
    <property type="term" value="C:cytoplasm"/>
    <property type="evidence" value="ECO:0007669"/>
    <property type="project" value="UniProtKB-SubCell"/>
</dbReference>
<dbReference type="GO" id="GO:0005525">
    <property type="term" value="F:GTP binding"/>
    <property type="evidence" value="ECO:0007669"/>
    <property type="project" value="UniProtKB-UniRule"/>
</dbReference>
<dbReference type="GO" id="GO:0003924">
    <property type="term" value="F:GTPase activity"/>
    <property type="evidence" value="ECO:0007669"/>
    <property type="project" value="UniProtKB-UniRule"/>
</dbReference>
<dbReference type="GO" id="GO:0000917">
    <property type="term" value="P:division septum assembly"/>
    <property type="evidence" value="ECO:0007669"/>
    <property type="project" value="UniProtKB-KW"/>
</dbReference>
<dbReference type="GO" id="GO:0043093">
    <property type="term" value="P:FtsZ-dependent cytokinesis"/>
    <property type="evidence" value="ECO:0007669"/>
    <property type="project" value="UniProtKB-UniRule"/>
</dbReference>
<dbReference type="GO" id="GO:0051258">
    <property type="term" value="P:protein polymerization"/>
    <property type="evidence" value="ECO:0007669"/>
    <property type="project" value="UniProtKB-UniRule"/>
</dbReference>
<dbReference type="CDD" id="cd02201">
    <property type="entry name" value="FtsZ_type1"/>
    <property type="match status" value="1"/>
</dbReference>
<dbReference type="FunFam" id="3.40.50.1440:FF:000001">
    <property type="entry name" value="Cell division protein FtsZ"/>
    <property type="match status" value="1"/>
</dbReference>
<dbReference type="Gene3D" id="3.30.1330.20">
    <property type="entry name" value="Tubulin/FtsZ, C-terminal domain"/>
    <property type="match status" value="1"/>
</dbReference>
<dbReference type="Gene3D" id="3.40.50.1440">
    <property type="entry name" value="Tubulin/FtsZ, GTPase domain"/>
    <property type="match status" value="1"/>
</dbReference>
<dbReference type="HAMAP" id="MF_00909">
    <property type="entry name" value="FtsZ"/>
    <property type="match status" value="1"/>
</dbReference>
<dbReference type="InterPro" id="IPR000158">
    <property type="entry name" value="Cell_div_FtsZ"/>
</dbReference>
<dbReference type="InterPro" id="IPR020805">
    <property type="entry name" value="Cell_div_FtsZ_CS"/>
</dbReference>
<dbReference type="InterPro" id="IPR045061">
    <property type="entry name" value="FtsZ/CetZ"/>
</dbReference>
<dbReference type="InterPro" id="IPR024757">
    <property type="entry name" value="FtsZ_C"/>
</dbReference>
<dbReference type="InterPro" id="IPR008280">
    <property type="entry name" value="Tub_FtsZ_C"/>
</dbReference>
<dbReference type="InterPro" id="IPR037103">
    <property type="entry name" value="Tubulin/FtsZ-like_C"/>
</dbReference>
<dbReference type="InterPro" id="IPR018316">
    <property type="entry name" value="Tubulin/FtsZ_2-layer-sand-dom"/>
</dbReference>
<dbReference type="InterPro" id="IPR036525">
    <property type="entry name" value="Tubulin/FtsZ_GTPase_sf"/>
</dbReference>
<dbReference type="InterPro" id="IPR003008">
    <property type="entry name" value="Tubulin_FtsZ_GTPase"/>
</dbReference>
<dbReference type="NCBIfam" id="TIGR00065">
    <property type="entry name" value="ftsZ"/>
    <property type="match status" value="1"/>
</dbReference>
<dbReference type="PANTHER" id="PTHR30314">
    <property type="entry name" value="CELL DIVISION PROTEIN FTSZ-RELATED"/>
    <property type="match status" value="1"/>
</dbReference>
<dbReference type="PANTHER" id="PTHR30314:SF3">
    <property type="entry name" value="MITOCHONDRIAL DIVISION PROTEIN FSZA"/>
    <property type="match status" value="1"/>
</dbReference>
<dbReference type="Pfam" id="PF12327">
    <property type="entry name" value="FtsZ_C"/>
    <property type="match status" value="1"/>
</dbReference>
<dbReference type="Pfam" id="PF00091">
    <property type="entry name" value="Tubulin"/>
    <property type="match status" value="1"/>
</dbReference>
<dbReference type="PRINTS" id="PR00423">
    <property type="entry name" value="CELLDVISFTSZ"/>
</dbReference>
<dbReference type="SMART" id="SM00864">
    <property type="entry name" value="Tubulin"/>
    <property type="match status" value="1"/>
</dbReference>
<dbReference type="SMART" id="SM00865">
    <property type="entry name" value="Tubulin_C"/>
    <property type="match status" value="1"/>
</dbReference>
<dbReference type="SUPFAM" id="SSF55307">
    <property type="entry name" value="Tubulin C-terminal domain-like"/>
    <property type="match status" value="1"/>
</dbReference>
<dbReference type="SUPFAM" id="SSF52490">
    <property type="entry name" value="Tubulin nucleotide-binding domain-like"/>
    <property type="match status" value="1"/>
</dbReference>
<dbReference type="PROSITE" id="PS01134">
    <property type="entry name" value="FTSZ_1"/>
    <property type="match status" value="1"/>
</dbReference>
<dbReference type="PROSITE" id="PS01135">
    <property type="entry name" value="FTSZ_2"/>
    <property type="match status" value="1"/>
</dbReference>